<name>NACA_MOUSE</name>
<protein>
    <recommendedName>
        <fullName>Nascent polypeptide-associated complex subunit alpha</fullName>
    </recommendedName>
    <alternativeName>
        <fullName>Alpha-NAC</fullName>
    </alternativeName>
    <alternativeName>
        <fullName>Alpha-NAC/1.9.2</fullName>
    </alternativeName>
</protein>
<gene>
    <name type="primary">Naca</name>
</gene>
<accession>Q60817</accession>
<accession>Q3THR6</accession>
<accession>Q4FZL8</accession>
<proteinExistence type="evidence at protein level"/>
<reference key="1">
    <citation type="journal article" date="1996" name="Genes Dev.">
        <title>Differential splicing-in of a proline-rich exon converts alphaNAC into a muscle-specific transcription factor.</title>
        <authorList>
            <person name="Yotov W.V."/>
            <person name="St Arnaud R."/>
        </authorList>
    </citation>
    <scope>NUCLEOTIDE SEQUENCE [GENOMIC DNA] (ISOFORM 1)</scope>
    <scope>FUNCTION</scope>
    <scope>ALTERNATIVE SPLICING</scope>
    <scope>TISSUE SPECIFICITY</scope>
</reference>
<reference key="2">
    <citation type="journal article" date="1998" name="Mol. Cell. Biol.">
        <title>The alpha chain of the nascent polypeptide-associated complex functions as a transcriptional coactivator.</title>
        <authorList>
            <person name="Yotov W.V."/>
            <person name="Moreau A."/>
            <person name="St Arnaud R."/>
        </authorList>
    </citation>
    <scope>NUCLEOTIDE SEQUENCE [MRNA] (ISOFORM 1)</scope>
    <scope>FUNCTION</scope>
    <scope>INTERACTION WITH TBP</scope>
    <scope>SUBCELLULAR LOCATION</scope>
</reference>
<reference key="3">
    <citation type="submission" date="1996-02" db="EMBL/GenBank/DDBJ databases">
        <authorList>
            <person name="Yotov W.V."/>
            <person name="St Arnaud R."/>
        </authorList>
    </citation>
    <scope>NUCLEOTIDE SEQUENCE [GENOMIC DNA]</scope>
</reference>
<reference key="4">
    <citation type="journal article" date="2005" name="Science">
        <title>The transcriptional landscape of the mammalian genome.</title>
        <authorList>
            <person name="Carninci P."/>
            <person name="Kasukawa T."/>
            <person name="Katayama S."/>
            <person name="Gough J."/>
            <person name="Frith M.C."/>
            <person name="Maeda N."/>
            <person name="Oyama R."/>
            <person name="Ravasi T."/>
            <person name="Lenhard B."/>
            <person name="Wells C."/>
            <person name="Kodzius R."/>
            <person name="Shimokawa K."/>
            <person name="Bajic V.B."/>
            <person name="Brenner S.E."/>
            <person name="Batalov S."/>
            <person name="Forrest A.R."/>
            <person name="Zavolan M."/>
            <person name="Davis M.J."/>
            <person name="Wilming L.G."/>
            <person name="Aidinis V."/>
            <person name="Allen J.E."/>
            <person name="Ambesi-Impiombato A."/>
            <person name="Apweiler R."/>
            <person name="Aturaliya R.N."/>
            <person name="Bailey T.L."/>
            <person name="Bansal M."/>
            <person name="Baxter L."/>
            <person name="Beisel K.W."/>
            <person name="Bersano T."/>
            <person name="Bono H."/>
            <person name="Chalk A.M."/>
            <person name="Chiu K.P."/>
            <person name="Choudhary V."/>
            <person name="Christoffels A."/>
            <person name="Clutterbuck D.R."/>
            <person name="Crowe M.L."/>
            <person name="Dalla E."/>
            <person name="Dalrymple B.P."/>
            <person name="de Bono B."/>
            <person name="Della Gatta G."/>
            <person name="di Bernardo D."/>
            <person name="Down T."/>
            <person name="Engstrom P."/>
            <person name="Fagiolini M."/>
            <person name="Faulkner G."/>
            <person name="Fletcher C.F."/>
            <person name="Fukushima T."/>
            <person name="Furuno M."/>
            <person name="Futaki S."/>
            <person name="Gariboldi M."/>
            <person name="Georgii-Hemming P."/>
            <person name="Gingeras T.R."/>
            <person name="Gojobori T."/>
            <person name="Green R.E."/>
            <person name="Gustincich S."/>
            <person name="Harbers M."/>
            <person name="Hayashi Y."/>
            <person name="Hensch T.K."/>
            <person name="Hirokawa N."/>
            <person name="Hill D."/>
            <person name="Huminiecki L."/>
            <person name="Iacono M."/>
            <person name="Ikeo K."/>
            <person name="Iwama A."/>
            <person name="Ishikawa T."/>
            <person name="Jakt M."/>
            <person name="Kanapin A."/>
            <person name="Katoh M."/>
            <person name="Kawasawa Y."/>
            <person name="Kelso J."/>
            <person name="Kitamura H."/>
            <person name="Kitano H."/>
            <person name="Kollias G."/>
            <person name="Krishnan S.P."/>
            <person name="Kruger A."/>
            <person name="Kummerfeld S.K."/>
            <person name="Kurochkin I.V."/>
            <person name="Lareau L.F."/>
            <person name="Lazarevic D."/>
            <person name="Lipovich L."/>
            <person name="Liu J."/>
            <person name="Liuni S."/>
            <person name="McWilliam S."/>
            <person name="Madan Babu M."/>
            <person name="Madera M."/>
            <person name="Marchionni L."/>
            <person name="Matsuda H."/>
            <person name="Matsuzawa S."/>
            <person name="Miki H."/>
            <person name="Mignone F."/>
            <person name="Miyake S."/>
            <person name="Morris K."/>
            <person name="Mottagui-Tabar S."/>
            <person name="Mulder N."/>
            <person name="Nakano N."/>
            <person name="Nakauchi H."/>
            <person name="Ng P."/>
            <person name="Nilsson R."/>
            <person name="Nishiguchi S."/>
            <person name="Nishikawa S."/>
            <person name="Nori F."/>
            <person name="Ohara O."/>
            <person name="Okazaki Y."/>
            <person name="Orlando V."/>
            <person name="Pang K.C."/>
            <person name="Pavan W.J."/>
            <person name="Pavesi G."/>
            <person name="Pesole G."/>
            <person name="Petrovsky N."/>
            <person name="Piazza S."/>
            <person name="Reed J."/>
            <person name="Reid J.F."/>
            <person name="Ring B.Z."/>
            <person name="Ringwald M."/>
            <person name="Rost B."/>
            <person name="Ruan Y."/>
            <person name="Salzberg S.L."/>
            <person name="Sandelin A."/>
            <person name="Schneider C."/>
            <person name="Schoenbach C."/>
            <person name="Sekiguchi K."/>
            <person name="Semple C.A."/>
            <person name="Seno S."/>
            <person name="Sessa L."/>
            <person name="Sheng Y."/>
            <person name="Shibata Y."/>
            <person name="Shimada H."/>
            <person name="Shimada K."/>
            <person name="Silva D."/>
            <person name="Sinclair B."/>
            <person name="Sperling S."/>
            <person name="Stupka E."/>
            <person name="Sugiura K."/>
            <person name="Sultana R."/>
            <person name="Takenaka Y."/>
            <person name="Taki K."/>
            <person name="Tammoja K."/>
            <person name="Tan S.L."/>
            <person name="Tang S."/>
            <person name="Taylor M.S."/>
            <person name="Tegner J."/>
            <person name="Teichmann S.A."/>
            <person name="Ueda H.R."/>
            <person name="van Nimwegen E."/>
            <person name="Verardo R."/>
            <person name="Wei C.L."/>
            <person name="Yagi K."/>
            <person name="Yamanishi H."/>
            <person name="Zabarovsky E."/>
            <person name="Zhu S."/>
            <person name="Zimmer A."/>
            <person name="Hide W."/>
            <person name="Bult C."/>
            <person name="Grimmond S.M."/>
            <person name="Teasdale R.D."/>
            <person name="Liu E.T."/>
            <person name="Brusic V."/>
            <person name="Quackenbush J."/>
            <person name="Wahlestedt C."/>
            <person name="Mattick J.S."/>
            <person name="Hume D.A."/>
            <person name="Kai C."/>
            <person name="Sasaki D."/>
            <person name="Tomaru Y."/>
            <person name="Fukuda S."/>
            <person name="Kanamori-Katayama M."/>
            <person name="Suzuki M."/>
            <person name="Aoki J."/>
            <person name="Arakawa T."/>
            <person name="Iida J."/>
            <person name="Imamura K."/>
            <person name="Itoh M."/>
            <person name="Kato T."/>
            <person name="Kawaji H."/>
            <person name="Kawagashira N."/>
            <person name="Kawashima T."/>
            <person name="Kojima M."/>
            <person name="Kondo S."/>
            <person name="Konno H."/>
            <person name="Nakano K."/>
            <person name="Ninomiya N."/>
            <person name="Nishio T."/>
            <person name="Okada M."/>
            <person name="Plessy C."/>
            <person name="Shibata K."/>
            <person name="Shiraki T."/>
            <person name="Suzuki S."/>
            <person name="Tagami M."/>
            <person name="Waki K."/>
            <person name="Watahiki A."/>
            <person name="Okamura-Oho Y."/>
            <person name="Suzuki H."/>
            <person name="Kawai J."/>
            <person name="Hayashizaki Y."/>
        </authorList>
    </citation>
    <scope>NUCLEOTIDE SEQUENCE [LARGE SCALE MRNA] (ISOFORM 1)</scope>
    <source>
        <strain>BALB/cJ</strain>
        <strain>C57BL/6J</strain>
        <strain>DBA/2J</strain>
        <tissue>Bone marrow</tissue>
        <tissue>Embryo</tissue>
        <tissue>Heart</tissue>
        <tissue>Kidney</tissue>
    </source>
</reference>
<reference key="5">
    <citation type="journal article" date="2004" name="Genome Res.">
        <title>The status, quality, and expansion of the NIH full-length cDNA project: the Mammalian Gene Collection (MGC).</title>
        <authorList>
            <consortium name="The MGC Project Team"/>
        </authorList>
    </citation>
    <scope>NUCLEOTIDE SEQUENCE [LARGE SCALE MRNA] (ISOFORM 1)</scope>
    <source>
        <strain>C57BL/6J</strain>
        <strain>Czech II</strain>
        <tissue>Brain</tissue>
        <tissue>Mammary tumor</tissue>
        <tissue>Placenta</tissue>
    </source>
</reference>
<reference key="6">
    <citation type="journal article" date="1998" name="FEBS Lett.">
        <title>Unregulated exposure of the ribosomal M-site caused by NAC depletion results in delivery of non-secretory polypeptides to the Sec61 complex.</title>
        <authorList>
            <person name="Moeller I."/>
            <person name="Beatrix B."/>
            <person name="Kreibich G."/>
            <person name="Sakai H."/>
            <person name="Lauring B."/>
            <person name="Wiedmann M."/>
        </authorList>
    </citation>
    <scope>TISSUE SPECIFICITY</scope>
</reference>
<reference key="7">
    <citation type="journal article" date="1998" name="Mol. Cell. Biol.">
        <title>Bone-specific expression of the alpha chain of the nascent polypeptide-associated complex, a coactivator potentiating c-Jun-mediated transcription.</title>
        <authorList>
            <person name="Moreau A."/>
            <person name="Yotov W.V."/>
            <person name="Glorieux F.H."/>
            <person name="St Arnaud R."/>
        </authorList>
    </citation>
    <scope>FUNCTION</scope>
    <scope>INTERACTION WITH JUN</scope>
    <scope>DEVELOPMENTAL STAGE</scope>
</reference>
<reference key="8">
    <citation type="journal article" date="1999" name="J. Biol. Chem.">
        <title>Cloning of novel injury-regulated genes. Implications for an important role of the muscle-specific protein skNAC in muscle repair.</title>
        <authorList>
            <person name="Munz B."/>
            <person name="Wiedmann M."/>
            <person name="Lochmueller H."/>
            <person name="Werner S."/>
        </authorList>
    </citation>
    <scope>SUBCELLULAR LOCATION</scope>
    <scope>TISSUE SPECIFICITY</scope>
    <scope>INDUCTION</scope>
</reference>
<reference key="9">
    <citation type="journal article" date="2004" name="Biochemistry">
        <title>GSK3 beta-dependent phosphorylation of the alpha NAC coactivator regulates its nuclear translocation and proteasome-mediated degradation.</title>
        <authorList>
            <person name="Quelo I."/>
            <person name="Akhouayri O."/>
            <person name="Prud'homme J."/>
            <person name="St Arnaud R."/>
        </authorList>
    </citation>
    <scope>SUBCELLULAR LOCATION</scope>
    <scope>DEGRADATION</scope>
    <scope>PHOSPHORYLATION AT THR-159</scope>
</reference>
<reference key="10">
    <citation type="journal article" date="2004" name="J. Biol. Chem.">
        <title>Integrin-linked kinase regulates the nuclear entry of the c-Jun coactivator alpha-NAC and its coactivation potency.</title>
        <authorList>
            <person name="Quelo I."/>
            <person name="Gauthier C."/>
            <person name="Hannigan G.E."/>
            <person name="Dedhar S."/>
            <person name="St-Arnaud R."/>
        </authorList>
    </citation>
    <scope>FUNCTION</scope>
    <scope>SUBCELLULAR LOCATION</scope>
    <scope>INTERACTION WITH ILK</scope>
    <scope>PHOSPHORYLATION AT SER-43</scope>
</reference>
<reference key="11">
    <citation type="journal article" date="2004" name="Mol. Cell. Proteomics">
        <title>Phosphoproteomic analysis of the developing mouse brain.</title>
        <authorList>
            <person name="Ballif B.A."/>
            <person name="Villen J."/>
            <person name="Beausoleil S.A."/>
            <person name="Schwartz D."/>
            <person name="Gygi S.P."/>
        </authorList>
    </citation>
    <scope>PHOSPHORYLATION [LARGE SCALE ANALYSIS] AT SER-166</scope>
    <scope>IDENTIFICATION BY MASS SPECTROMETRY [LARGE SCALE ANALYSIS]</scope>
    <source>
        <tissue>Embryonic brain</tissue>
    </source>
</reference>
<reference key="12">
    <citation type="journal article" date="2005" name="Mol. Cell. Biol.">
        <title>Sequence-specific DNA binding by the alphaNAC coactivator is required for potentiation of c-Jun-dependent transcription of the osteocalcin gene.</title>
        <authorList>
            <person name="Akhouayri O."/>
            <person name="Quelo I."/>
            <person name="St-Arnaud R."/>
        </authorList>
    </citation>
    <scope>FUNCTION</scope>
</reference>
<reference key="13">
    <citation type="journal article" date="2007" name="Proc. Natl. Acad. Sci. U.S.A.">
        <title>Large-scale phosphorylation analysis of mouse liver.</title>
        <authorList>
            <person name="Villen J."/>
            <person name="Beausoleil S.A."/>
            <person name="Gerber S.A."/>
            <person name="Gygi S.P."/>
        </authorList>
    </citation>
    <scope>PHOSPHORYLATION [LARGE SCALE ANALYSIS] AT SER-166</scope>
    <scope>IDENTIFICATION BY MASS SPECTROMETRY [LARGE SCALE ANALYSIS]</scope>
    <source>
        <tissue>Liver</tissue>
    </source>
</reference>
<reference key="14">
    <citation type="journal article" date="2009" name="Immunity">
        <title>The phagosomal proteome in interferon-gamma-activated macrophages.</title>
        <authorList>
            <person name="Trost M."/>
            <person name="English L."/>
            <person name="Lemieux S."/>
            <person name="Courcelles M."/>
            <person name="Desjardins M."/>
            <person name="Thibault P."/>
        </authorList>
    </citation>
    <scope>PHOSPHORYLATION [LARGE SCALE ANALYSIS] AT SER-166</scope>
    <scope>IDENTIFICATION BY MASS SPECTROMETRY [LARGE SCALE ANALYSIS]</scope>
</reference>
<reference key="15">
    <citation type="journal article" date="2010" name="Cell">
        <title>A tissue-specific atlas of mouse protein phosphorylation and expression.</title>
        <authorList>
            <person name="Huttlin E.L."/>
            <person name="Jedrychowski M.P."/>
            <person name="Elias J.E."/>
            <person name="Goswami T."/>
            <person name="Rad R."/>
            <person name="Beausoleil S.A."/>
            <person name="Villen J."/>
            <person name="Haas W."/>
            <person name="Sowa M.E."/>
            <person name="Gygi S.P."/>
        </authorList>
    </citation>
    <scope>PHOSPHORYLATION [LARGE SCALE ANALYSIS] AT THR-159 AND SER-166</scope>
    <scope>IDENTIFICATION BY MASS SPECTROMETRY [LARGE SCALE ANALYSIS]</scope>
    <source>
        <tissue>Brain</tissue>
        <tissue>Brown adipose tissue</tissue>
        <tissue>Heart</tissue>
        <tissue>Kidney</tissue>
        <tissue>Liver</tissue>
        <tissue>Lung</tissue>
        <tissue>Pancreas</tissue>
        <tissue>Spleen</tissue>
        <tissue>Testis</tissue>
    </source>
</reference>
<reference key="16">
    <citation type="journal article" date="2013" name="Mol. Cell">
        <title>SIRT5-mediated lysine desuccinylation impacts diverse metabolic pathways.</title>
        <authorList>
            <person name="Park J."/>
            <person name="Chen Y."/>
            <person name="Tishkoff D.X."/>
            <person name="Peng C."/>
            <person name="Tan M."/>
            <person name="Dai L."/>
            <person name="Xie Z."/>
            <person name="Zhang Y."/>
            <person name="Zwaans B.M."/>
            <person name="Skinner M.E."/>
            <person name="Lombard D.B."/>
            <person name="Zhao Y."/>
        </authorList>
    </citation>
    <scope>ACETYLATION [LARGE SCALE ANALYSIS] AT LYS-142</scope>
    <scope>IDENTIFICATION BY MASS SPECTROMETRY [LARGE SCALE ANALYSIS]</scope>
    <source>
        <tissue>Embryonic fibroblast</tissue>
    </source>
</reference>
<feature type="chain" id="PRO_0000135577" description="Nascent polypeptide-associated complex subunit alpha">
    <location>
        <begin position="1"/>
        <end position="215"/>
    </location>
</feature>
<feature type="domain" description="NAC-A/B" evidence="3">
    <location>
        <begin position="70"/>
        <end position="135"/>
    </location>
</feature>
<feature type="domain" description="UBA">
    <location>
        <begin position="176"/>
        <end position="213"/>
    </location>
</feature>
<feature type="region of interest" description="Disordered" evidence="4">
    <location>
        <begin position="1"/>
        <end position="81"/>
    </location>
</feature>
<feature type="region of interest" description="Required for DNA-binding">
    <location>
        <begin position="69"/>
        <end position="80"/>
    </location>
</feature>
<feature type="region of interest" description="RNA/DNA-binding" evidence="1">
    <location>
        <begin position="93"/>
        <end position="108"/>
    </location>
</feature>
<feature type="compositionally biased region" description="Polar residues" evidence="4">
    <location>
        <begin position="9"/>
        <end position="28"/>
    </location>
</feature>
<feature type="compositionally biased region" description="Acidic residues" evidence="4">
    <location>
        <begin position="29"/>
        <end position="42"/>
    </location>
</feature>
<feature type="compositionally biased region" description="Low complexity" evidence="4">
    <location>
        <begin position="44"/>
        <end position="57"/>
    </location>
</feature>
<feature type="modified residue" description="Phosphoserine; by ILK1" evidence="7">
    <location>
        <position position="43"/>
    </location>
</feature>
<feature type="modified residue" description="Phosphoserine" evidence="2">
    <location>
        <position position="132"/>
    </location>
</feature>
<feature type="modified residue" description="N6-acetyllysine; alternate" evidence="18">
    <location>
        <position position="142"/>
    </location>
</feature>
<feature type="modified residue" description="Phosphothreonine; by GSK3-beta" evidence="6 17">
    <location>
        <position position="159"/>
    </location>
</feature>
<feature type="modified residue" description="Phosphothreonine" evidence="2">
    <location>
        <position position="161"/>
    </location>
</feature>
<feature type="modified residue" description="Phosphoserine" evidence="14 15 16 17">
    <location>
        <position position="166"/>
    </location>
</feature>
<feature type="modified residue" description="Phosphoserine" evidence="2">
    <location>
        <position position="186"/>
    </location>
</feature>
<feature type="modified residue" description="Phosphoserine" evidence="2">
    <location>
        <position position="191"/>
    </location>
</feature>
<feature type="modified residue" description="Phosphoserine" evidence="2">
    <location>
        <position position="203"/>
    </location>
</feature>
<feature type="cross-link" description="Glycyl lysine isopeptide (Lys-Gly) (interchain with G-Cter in SUMO2); alternate" evidence="2">
    <location>
        <position position="142"/>
    </location>
</feature>
<feature type="sequence conflict" description="In Ref. 4; BAE40130." evidence="13" ref="4">
    <original>Q</original>
    <variation>K</variation>
    <location>
        <position position="52"/>
    </location>
</feature>
<keyword id="KW-0007">Acetylation</keyword>
<keyword id="KW-0025">Alternative splicing</keyword>
<keyword id="KW-0143">Chaperone</keyword>
<keyword id="KW-0963">Cytoplasm</keyword>
<keyword id="KW-0238">DNA-binding</keyword>
<keyword id="KW-1017">Isopeptide bond</keyword>
<keyword id="KW-0539">Nucleus</keyword>
<keyword id="KW-0597">Phosphoprotein</keyword>
<keyword id="KW-0653">Protein transport</keyword>
<keyword id="KW-1185">Reference proteome</keyword>
<keyword id="KW-0804">Transcription</keyword>
<keyword id="KW-0813">Transport</keyword>
<keyword id="KW-0832">Ubl conjugation</keyword>
<sequence>MPGEATETVPATEQELPQPQAETGSGTESDSDESVPELEEQDSTQTATQQAQLAAAAEIDEEPVSKAKQSRSEKKARKAMSKLGLRQVTGVTRVTIRKSKNILFVITKPDVYKSPASDTYIVFGEAKIEDLSQQAQLAAAEKFKVQGEAVSNIQENTQTPTVQEESEEEEVDETGVEVKDIELVMSQANVSRAKAVRALKNNSNDIVNAIMELTM</sequence>
<dbReference type="EMBL" id="U22151">
    <property type="protein sequence ID" value="AAB80961.1"/>
    <property type="molecule type" value="mRNA"/>
</dbReference>
<dbReference type="EMBL" id="U48363">
    <property type="protein sequence ID" value="AAB18733.1"/>
    <property type="molecule type" value="Genomic_DNA"/>
</dbReference>
<dbReference type="EMBL" id="AK146197">
    <property type="protein sequence ID" value="BAE26971.1"/>
    <property type="molecule type" value="mRNA"/>
</dbReference>
<dbReference type="EMBL" id="AK151928">
    <property type="protein sequence ID" value="BAE30804.1"/>
    <property type="molecule type" value="mRNA"/>
</dbReference>
<dbReference type="EMBL" id="AK161678">
    <property type="protein sequence ID" value="BAE36526.1"/>
    <property type="molecule type" value="mRNA"/>
</dbReference>
<dbReference type="EMBL" id="AK168023">
    <property type="protein sequence ID" value="BAE40008.1"/>
    <property type="molecule type" value="mRNA"/>
</dbReference>
<dbReference type="EMBL" id="AK168169">
    <property type="protein sequence ID" value="BAE40130.1"/>
    <property type="molecule type" value="mRNA"/>
</dbReference>
<dbReference type="EMBL" id="AK168607">
    <property type="protein sequence ID" value="BAE40474.1"/>
    <property type="molecule type" value="mRNA"/>
</dbReference>
<dbReference type="EMBL" id="AK169432">
    <property type="protein sequence ID" value="BAE41173.1"/>
    <property type="molecule type" value="mRNA"/>
</dbReference>
<dbReference type="EMBL" id="AK169435">
    <property type="protein sequence ID" value="BAE41176.1"/>
    <property type="molecule type" value="mRNA"/>
</dbReference>
<dbReference type="EMBL" id="BC029830">
    <property type="protein sequence ID" value="AAH29830.1"/>
    <property type="molecule type" value="mRNA"/>
</dbReference>
<dbReference type="EMBL" id="BC083340">
    <property type="protein sequence ID" value="AAH83340.1"/>
    <property type="molecule type" value="mRNA"/>
</dbReference>
<dbReference type="EMBL" id="BC099375">
    <property type="protein sequence ID" value="AAH99375.1"/>
    <property type="molecule type" value="mRNA"/>
</dbReference>
<dbReference type="CCDS" id="CCDS24258.1">
    <molecule id="Q60817-1"/>
</dbReference>
<dbReference type="PIR" id="T30827">
    <property type="entry name" value="T30827"/>
</dbReference>
<dbReference type="RefSeq" id="NP_001269905.1">
    <molecule id="Q60817-1"/>
    <property type="nucleotide sequence ID" value="NM_001282976.2"/>
</dbReference>
<dbReference type="RefSeq" id="NP_038636.2">
    <molecule id="Q60817-1"/>
    <property type="nucleotide sequence ID" value="NM_013608.3"/>
</dbReference>
<dbReference type="RefSeq" id="XP_036011565.1">
    <molecule id="Q60817-1"/>
    <property type="nucleotide sequence ID" value="XM_036155672.1"/>
</dbReference>
<dbReference type="SMR" id="Q60817"/>
<dbReference type="BioGRID" id="201682">
    <property type="interactions" value="28"/>
</dbReference>
<dbReference type="IntAct" id="Q60817">
    <property type="interactions" value="4"/>
</dbReference>
<dbReference type="iPTMnet" id="Q60817"/>
<dbReference type="jPOST" id="Q60817"/>
<dbReference type="PeptideAtlas" id="Q60817"/>
<dbReference type="ProteomicsDB" id="287344">
    <molecule id="Q60817-1"/>
</dbReference>
<dbReference type="Pumba" id="Q60817"/>
<dbReference type="Antibodypedia" id="28384">
    <property type="antibodies" value="96 antibodies from 17 providers"/>
</dbReference>
<dbReference type="DNASU" id="17938"/>
<dbReference type="Ensembl" id="ENSMUST00000073868.9">
    <molecule id="Q60817-1"/>
    <property type="protein sequence ID" value="ENSMUSP00000073532.8"/>
    <property type="gene ID" value="ENSMUSG00000061315.15"/>
</dbReference>
<dbReference type="GeneID" id="17938"/>
<dbReference type="UCSC" id="uc007hlb.2">
    <molecule id="Q60817-1"/>
    <property type="organism name" value="mouse"/>
</dbReference>
<dbReference type="AGR" id="MGI:106095"/>
<dbReference type="CTD" id="4666"/>
<dbReference type="MGI" id="MGI:106095">
    <property type="gene designation" value="Naca"/>
</dbReference>
<dbReference type="VEuPathDB" id="HostDB:ENSMUSG00000061315"/>
<dbReference type="GeneTree" id="ENSGT00440000033468"/>
<dbReference type="HOGENOM" id="CLU_057806_1_2_1"/>
<dbReference type="OrthoDB" id="3169036at2759"/>
<dbReference type="BioGRID-ORCS" id="17938">
    <property type="hits" value="27 hits in 78 CRISPR screens"/>
</dbReference>
<dbReference type="ChiTaRS" id="Naca">
    <property type="organism name" value="mouse"/>
</dbReference>
<dbReference type="Proteomes" id="UP000000589">
    <property type="component" value="Chromosome 10"/>
</dbReference>
<dbReference type="Bgee" id="ENSMUSG00000061315">
    <property type="expression patterns" value="Expressed in ventricular zone and 69 other cell types or tissues"/>
</dbReference>
<dbReference type="ExpressionAtlas" id="Q60817">
    <property type="expression patterns" value="baseline and differential"/>
</dbReference>
<dbReference type="GO" id="GO:0005737">
    <property type="term" value="C:cytoplasm"/>
    <property type="evidence" value="ECO:0000314"/>
    <property type="project" value="MGI"/>
</dbReference>
<dbReference type="GO" id="GO:0005854">
    <property type="term" value="C:nascent polypeptide-associated complex"/>
    <property type="evidence" value="ECO:0007669"/>
    <property type="project" value="InterPro"/>
</dbReference>
<dbReference type="GO" id="GO:0005634">
    <property type="term" value="C:nucleus"/>
    <property type="evidence" value="ECO:0000314"/>
    <property type="project" value="MGI"/>
</dbReference>
<dbReference type="GO" id="GO:0003677">
    <property type="term" value="F:DNA binding"/>
    <property type="evidence" value="ECO:0007669"/>
    <property type="project" value="UniProtKB-KW"/>
</dbReference>
<dbReference type="GO" id="GO:0017025">
    <property type="term" value="F:TBP-class protein binding"/>
    <property type="evidence" value="ECO:0000314"/>
    <property type="project" value="MGI"/>
</dbReference>
<dbReference type="GO" id="GO:0003713">
    <property type="term" value="F:transcription coactivator activity"/>
    <property type="evidence" value="ECO:0000314"/>
    <property type="project" value="MGI"/>
</dbReference>
<dbReference type="GO" id="GO:0003231">
    <property type="term" value="P:cardiac ventricle development"/>
    <property type="evidence" value="ECO:0000315"/>
    <property type="project" value="BHF-UCL"/>
</dbReference>
<dbReference type="GO" id="GO:0007507">
    <property type="term" value="P:heart development"/>
    <property type="evidence" value="ECO:0000315"/>
    <property type="project" value="BHF-UCL"/>
</dbReference>
<dbReference type="GO" id="GO:0061384">
    <property type="term" value="P:heart trabecula morphogenesis"/>
    <property type="evidence" value="ECO:0000315"/>
    <property type="project" value="BHF-UCL"/>
</dbReference>
<dbReference type="GO" id="GO:0051451">
    <property type="term" value="P:myoblast migration"/>
    <property type="evidence" value="ECO:0000315"/>
    <property type="project" value="MGI"/>
</dbReference>
<dbReference type="GO" id="GO:0010664">
    <property type="term" value="P:negative regulation of striated muscle cell apoptotic process"/>
    <property type="evidence" value="ECO:0000315"/>
    <property type="project" value="BHF-UCL"/>
</dbReference>
<dbReference type="GO" id="GO:0000122">
    <property type="term" value="P:negative regulation of transcription by RNA polymerase II"/>
    <property type="evidence" value="ECO:0000315"/>
    <property type="project" value="BHF-UCL"/>
</dbReference>
<dbReference type="GO" id="GO:2000138">
    <property type="term" value="P:positive regulation of cell proliferation involved in heart morphogenesis"/>
    <property type="evidence" value="ECO:0000315"/>
    <property type="project" value="BHF-UCL"/>
</dbReference>
<dbReference type="GO" id="GO:0048633">
    <property type="term" value="P:positive regulation of skeletal muscle tissue growth"/>
    <property type="evidence" value="ECO:0000315"/>
    <property type="project" value="BHF-UCL"/>
</dbReference>
<dbReference type="GO" id="GO:0045944">
    <property type="term" value="P:positive regulation of transcription by RNA polymerase II"/>
    <property type="evidence" value="ECO:0000315"/>
    <property type="project" value="BHF-UCL"/>
</dbReference>
<dbReference type="GO" id="GO:0015031">
    <property type="term" value="P:protein transport"/>
    <property type="evidence" value="ECO:0007669"/>
    <property type="project" value="UniProtKB-KW"/>
</dbReference>
<dbReference type="GO" id="GO:0048742">
    <property type="term" value="P:regulation of skeletal muscle fiber development"/>
    <property type="evidence" value="ECO:0000315"/>
    <property type="project" value="BHF-UCL"/>
</dbReference>
<dbReference type="GO" id="GO:0043403">
    <property type="term" value="P:skeletal muscle tissue regeneration"/>
    <property type="evidence" value="ECO:0000315"/>
    <property type="project" value="BHF-UCL"/>
</dbReference>
<dbReference type="GO" id="GO:0042060">
    <property type="term" value="P:wound healing"/>
    <property type="evidence" value="ECO:0000315"/>
    <property type="project" value="BHF-UCL"/>
</dbReference>
<dbReference type="CDD" id="cd22054">
    <property type="entry name" value="NAC_NACA"/>
    <property type="match status" value="1"/>
</dbReference>
<dbReference type="CDD" id="cd14415">
    <property type="entry name" value="UBA_NACA_NACP1"/>
    <property type="match status" value="1"/>
</dbReference>
<dbReference type="FunFam" id="2.20.70.30:FF:000002">
    <property type="entry name" value="Nascent polypeptide-associated complex (NAC), alpha subunit"/>
    <property type="match status" value="1"/>
</dbReference>
<dbReference type="FunFam" id="1.10.8.10:FF:000006">
    <property type="entry name" value="Putative nascent polypeptide-associated complex subunit alpha"/>
    <property type="match status" value="1"/>
</dbReference>
<dbReference type="Gene3D" id="1.10.8.10">
    <property type="entry name" value="DNA helicase RuvA subunit, C-terminal domain"/>
    <property type="match status" value="1"/>
</dbReference>
<dbReference type="Gene3D" id="2.20.70.30">
    <property type="entry name" value="Nascent polypeptide-associated complex domain"/>
    <property type="match status" value="1"/>
</dbReference>
<dbReference type="InterPro" id="IPR016641">
    <property type="entry name" value="EGD2/NACA0like"/>
</dbReference>
<dbReference type="InterPro" id="IPR044034">
    <property type="entry name" value="NAC-like_UBA"/>
</dbReference>
<dbReference type="InterPro" id="IPR038187">
    <property type="entry name" value="NAC_A/B_dom_sf"/>
</dbReference>
<dbReference type="InterPro" id="IPR002715">
    <property type="entry name" value="Nas_poly-pep-assoc_cplx_dom"/>
</dbReference>
<dbReference type="PANTHER" id="PTHR21713">
    <property type="entry name" value="NASCENT POLYPEPTIDE ASSOCIATED COMPLEX ALPHA SUBUNIT-RELATED"/>
    <property type="match status" value="1"/>
</dbReference>
<dbReference type="Pfam" id="PF01849">
    <property type="entry name" value="NAC"/>
    <property type="match status" value="1"/>
</dbReference>
<dbReference type="Pfam" id="PF19026">
    <property type="entry name" value="UBA_HYPK"/>
    <property type="match status" value="1"/>
</dbReference>
<dbReference type="PIRSF" id="PIRSF015901">
    <property type="entry name" value="NAC_alpha"/>
    <property type="match status" value="1"/>
</dbReference>
<dbReference type="SMART" id="SM01407">
    <property type="entry name" value="NAC"/>
    <property type="match status" value="1"/>
</dbReference>
<dbReference type="PROSITE" id="PS51151">
    <property type="entry name" value="NAC_AB"/>
    <property type="match status" value="1"/>
</dbReference>
<organism>
    <name type="scientific">Mus musculus</name>
    <name type="common">Mouse</name>
    <dbReference type="NCBI Taxonomy" id="10090"/>
    <lineage>
        <taxon>Eukaryota</taxon>
        <taxon>Metazoa</taxon>
        <taxon>Chordata</taxon>
        <taxon>Craniata</taxon>
        <taxon>Vertebrata</taxon>
        <taxon>Euteleostomi</taxon>
        <taxon>Mammalia</taxon>
        <taxon>Eutheria</taxon>
        <taxon>Euarchontoglires</taxon>
        <taxon>Glires</taxon>
        <taxon>Rodentia</taxon>
        <taxon>Myomorpha</taxon>
        <taxon>Muroidea</taxon>
        <taxon>Muridae</taxon>
        <taxon>Murinae</taxon>
        <taxon>Mus</taxon>
        <taxon>Mus</taxon>
    </lineage>
</organism>
<comment type="function">
    <text evidence="1 7 8 9 10 11">Prevents inappropriate targeting of non-secretory polypeptides to the endoplasmic reticulum (ER). Binds to nascent polypeptide chains as they emerge from the ribosome and blocks their interaction with the signal recognition particle (SRP), which normally targets nascent secretory peptides to the ER. Also reduces the inherent affinity of ribosomes for protein translocation sites in the ER membrane (M sites) (By similarity). Isoform 1 and isoform 2 appear to bind DNA and play roles in transcription. Isoform 1 may function as a specific coactivator for JUN, acting to stabilize the interaction of JUN homodimers with promoter elements.</text>
</comment>
<comment type="subunit">
    <text evidence="1 7 10 11">Part of the nascent polypeptide-associated complex (NAC), which is a heterodimer of NACA and BTF3 (via NAC-A/B domains). NAC associates with ribosomes through the BTF3/NACB subunit and contacts the ribosomal protein L23, which is positioned near the exiting site. Both subunits can contact nascent polypeptide chains. NACA may also form homodimers, and only this form binds DNA (By similarity). Interacts with TBP and JUN.</text>
</comment>
<comment type="subcellular location">
    <subcellularLocation>
        <location>Cytoplasm</location>
    </subcellularLocation>
    <subcellularLocation>
        <location>Nucleus</location>
    </subcellularLocation>
    <text evidence="1">The heterodimer is located mainly in the cytosol, and the homodimer in the nucleus.</text>
</comment>
<comment type="alternative products">
    <event type="alternative splicing"/>
    <isoform>
        <id>Q60817-1</id>
        <name>1</name>
        <sequence type="displayed"/>
    </isoform>
    <isoform>
        <id>P70670-1</id>
        <name>2</name>
        <name>Gp220</name>
        <name>skNAC</name>
        <sequence type="external"/>
    </isoform>
</comment>
<comment type="tissue specificity">
    <text evidence="5 9 12">Isoform 1 appears to be ubiquitously expressed.</text>
</comment>
<comment type="developmental stage">
    <text evidence="11">Expressed concomitant with the onset of mineralization in ossification centers of developing bone.</text>
</comment>
<comment type="domain">
    <text evidence="1">The positively charged inner surface of the NAC-A/B domain is crucial for NACA localization in the nucleus and DNA-binding. This region is blocked from binding nucleic acids in the heterodimeric complex by a helix region in the beta-subunit, it also displays much higher affinity for RNA than DNA (By similarity).</text>
</comment>
<comment type="PTM">
    <text evidence="6 7">Phosphorylation of Ser-43 by ILK during cell adhesion may promote nuclear localization. Phosphorylation of Thr-159 by GSK3B may promote proteasome mediated degradation.</text>
</comment>
<comment type="similarity">
    <text evidence="13">Belongs to the NAC-alpha family.</text>
</comment>
<evidence type="ECO:0000250" key="1"/>
<evidence type="ECO:0000250" key="2">
    <source>
        <dbReference type="UniProtKB" id="Q13765"/>
    </source>
</evidence>
<evidence type="ECO:0000255" key="3">
    <source>
        <dbReference type="PROSITE-ProRule" id="PRU00507"/>
    </source>
</evidence>
<evidence type="ECO:0000256" key="4">
    <source>
        <dbReference type="SAM" id="MobiDB-lite"/>
    </source>
</evidence>
<evidence type="ECO:0000269" key="5">
    <source>
    </source>
</evidence>
<evidence type="ECO:0000269" key="6">
    <source>
    </source>
</evidence>
<evidence type="ECO:0000269" key="7">
    <source>
    </source>
</evidence>
<evidence type="ECO:0000269" key="8">
    <source>
    </source>
</evidence>
<evidence type="ECO:0000269" key="9">
    <source>
    </source>
</evidence>
<evidence type="ECO:0000269" key="10">
    <source>
    </source>
</evidence>
<evidence type="ECO:0000269" key="11">
    <source>
    </source>
</evidence>
<evidence type="ECO:0000269" key="12">
    <source>
    </source>
</evidence>
<evidence type="ECO:0000305" key="13"/>
<evidence type="ECO:0007744" key="14">
    <source>
    </source>
</evidence>
<evidence type="ECO:0007744" key="15">
    <source>
    </source>
</evidence>
<evidence type="ECO:0007744" key="16">
    <source>
    </source>
</evidence>
<evidence type="ECO:0007744" key="17">
    <source>
    </source>
</evidence>
<evidence type="ECO:0007744" key="18">
    <source>
    </source>
</evidence>